<dbReference type="EMBL" id="AE009949">
    <property type="protein sequence ID" value="AAL98203.1"/>
    <property type="molecule type" value="Genomic_DNA"/>
</dbReference>
<dbReference type="RefSeq" id="WP_011018067.1">
    <property type="nucleotide sequence ID" value="NC_003485.1"/>
</dbReference>
<dbReference type="SMR" id="Q8NZZ1"/>
<dbReference type="KEGG" id="spm:spyM18_1659"/>
<dbReference type="HOGENOM" id="CLU_105319_0_0_9"/>
<dbReference type="Gene3D" id="3.40.50.450">
    <property type="match status" value="1"/>
</dbReference>
<dbReference type="HAMAP" id="MF_01575">
    <property type="entry name" value="UPF0398"/>
    <property type="match status" value="1"/>
</dbReference>
<dbReference type="InterPro" id="IPR010697">
    <property type="entry name" value="YspA"/>
</dbReference>
<dbReference type="NCBIfam" id="NF010181">
    <property type="entry name" value="PRK13660.1"/>
    <property type="match status" value="1"/>
</dbReference>
<dbReference type="PANTHER" id="PTHR38440:SF1">
    <property type="entry name" value="UPF0398 PROTEIN SPR0331"/>
    <property type="match status" value="1"/>
</dbReference>
<dbReference type="PANTHER" id="PTHR38440">
    <property type="entry name" value="UPF0398 PROTEIN YPSA"/>
    <property type="match status" value="1"/>
</dbReference>
<dbReference type="Pfam" id="PF06908">
    <property type="entry name" value="YpsA"/>
    <property type="match status" value="1"/>
</dbReference>
<dbReference type="PIRSF" id="PIRSF021290">
    <property type="entry name" value="DUF1273"/>
    <property type="match status" value="1"/>
</dbReference>
<dbReference type="SUPFAM" id="SSF102405">
    <property type="entry name" value="MCP/YpsA-like"/>
    <property type="match status" value="1"/>
</dbReference>
<reference key="1">
    <citation type="journal article" date="2002" name="Proc. Natl. Acad. Sci. U.S.A.">
        <title>Genome sequence and comparative microarray analysis of serotype M18 group A Streptococcus strains associated with acute rheumatic fever outbreaks.</title>
        <authorList>
            <person name="Smoot J.C."/>
            <person name="Barbian K.D."/>
            <person name="Van Gompel J.J."/>
            <person name="Smoot L.M."/>
            <person name="Chaussee M.S."/>
            <person name="Sylva G.L."/>
            <person name="Sturdevant D.E."/>
            <person name="Ricklefs S.M."/>
            <person name="Porcella S.F."/>
            <person name="Parkins L.D."/>
            <person name="Beres S.B."/>
            <person name="Campbell D.S."/>
            <person name="Smith T.M."/>
            <person name="Zhang Q."/>
            <person name="Kapur V."/>
            <person name="Daly J.A."/>
            <person name="Veasy L.G."/>
            <person name="Musser J.M."/>
        </authorList>
    </citation>
    <scope>NUCLEOTIDE SEQUENCE [LARGE SCALE GENOMIC DNA]</scope>
    <source>
        <strain>MGAS8232</strain>
    </source>
</reference>
<sequence length="171" mass="20382">MTAILITGYRSFEIGIFDHKDPRVSIIKQAIRKDLIGYLENGVDWFIFTGNLGFEQWALEVANELKEEYPLQIATIFLFETHGDKWNEKNQEVLSQFKAVDFVKYYFPNYEQPTQFSQYYQFLLEKTEGAYVFYDTENETNLKYFLKKAKDMPHYQLLLLTFDRLNDMSQS</sequence>
<comment type="similarity">
    <text evidence="1">Belongs to the UPF0398 family.</text>
</comment>
<organism>
    <name type="scientific">Streptococcus pyogenes serotype M18 (strain MGAS8232)</name>
    <dbReference type="NCBI Taxonomy" id="186103"/>
    <lineage>
        <taxon>Bacteria</taxon>
        <taxon>Bacillati</taxon>
        <taxon>Bacillota</taxon>
        <taxon>Bacilli</taxon>
        <taxon>Lactobacillales</taxon>
        <taxon>Streptococcaceae</taxon>
        <taxon>Streptococcus</taxon>
    </lineage>
</organism>
<accession>Q8NZZ1</accession>
<gene>
    <name type="ordered locus">spyM18_1659</name>
</gene>
<proteinExistence type="inferred from homology"/>
<evidence type="ECO:0000255" key="1">
    <source>
        <dbReference type="HAMAP-Rule" id="MF_01575"/>
    </source>
</evidence>
<name>Y1659_STRP8</name>
<protein>
    <recommendedName>
        <fullName evidence="1">UPF0398 protein spyM18_1659</fullName>
    </recommendedName>
</protein>
<feature type="chain" id="PRO_0000267190" description="UPF0398 protein spyM18_1659">
    <location>
        <begin position="1"/>
        <end position="171"/>
    </location>
</feature>